<sequence>MPITKATPLFLRYRLKGFVFLTLLLVQGVFTACAPAVPVNNKSVSAVQPEDKQALKPDPALGEYTSDLKFNTNFIPKKDDPFRPFYDLSFTLQFQDPYTATYGTGWLIDWKDNNQPNKFTAYIATNLHVADNLRNVNDYEFFNQFDYFDDPTESFTLGKFVDGNEIKQIVPDAMHEPSLVRIETSKLPKTAYTTTLFINDLGEYRLPAADFAVLESI</sequence>
<accession>Q50337</accession>
<dbReference type="EMBL" id="U43738">
    <property type="protein sequence ID" value="AAC43666.1"/>
    <property type="molecule type" value="Genomic_DNA"/>
</dbReference>
<dbReference type="EMBL" id="U00089">
    <property type="protein sequence ID" value="AAB95900.1"/>
    <property type="molecule type" value="Genomic_DNA"/>
</dbReference>
<dbReference type="PIR" id="S62795">
    <property type="entry name" value="S62795"/>
</dbReference>
<dbReference type="RefSeq" id="NP_110279.1">
    <property type="nucleotide sequence ID" value="NC_000912.1"/>
</dbReference>
<dbReference type="RefSeq" id="WP_010874947.1">
    <property type="nucleotide sequence ID" value="NZ_OU342337.1"/>
</dbReference>
<dbReference type="IntAct" id="Q50337">
    <property type="interactions" value="1"/>
</dbReference>
<dbReference type="STRING" id="272634.MPN_590"/>
<dbReference type="EnsemblBacteria" id="AAB95900">
    <property type="protein sequence ID" value="AAB95900"/>
    <property type="gene ID" value="MPN_590"/>
</dbReference>
<dbReference type="KEGG" id="mpn:MPN_590"/>
<dbReference type="PATRIC" id="fig|272634.6.peg.653"/>
<dbReference type="HOGENOM" id="CLU_1271145_0_0_14"/>
<dbReference type="OrthoDB" id="398874at2"/>
<dbReference type="BioCyc" id="MPNE272634:G1GJ3-962-MONOMER"/>
<dbReference type="Proteomes" id="UP000000808">
    <property type="component" value="Chromosome"/>
</dbReference>
<dbReference type="GO" id="GO:0005886">
    <property type="term" value="C:plasma membrane"/>
    <property type="evidence" value="ECO:0007669"/>
    <property type="project" value="UniProtKB-SubCell"/>
</dbReference>
<dbReference type="InterPro" id="IPR022382">
    <property type="entry name" value="Mycoplasma_peptidase_DUF31"/>
</dbReference>
<dbReference type="InterPro" id="IPR009003">
    <property type="entry name" value="Peptidase_S1_PA"/>
</dbReference>
<dbReference type="InterPro" id="IPR022381">
    <property type="entry name" value="Uncharacterised_MG067"/>
</dbReference>
<dbReference type="Pfam" id="PF01732">
    <property type="entry name" value="Mycop_pep_DUF31"/>
    <property type="match status" value="1"/>
</dbReference>
<dbReference type="PRINTS" id="PR00840">
    <property type="entry name" value="Y06768FAMILY"/>
</dbReference>
<dbReference type="SUPFAM" id="SSF50494">
    <property type="entry name" value="Trypsin-like serine proteases"/>
    <property type="match status" value="1"/>
</dbReference>
<dbReference type="PROSITE" id="PS51257">
    <property type="entry name" value="PROKAR_LIPOPROTEIN"/>
    <property type="match status" value="1"/>
</dbReference>
<feature type="signal peptide" evidence="1">
    <location>
        <begin position="1"/>
        <end position="32"/>
    </location>
</feature>
<feature type="chain" id="PRO_0000018744" description="Uncharacterized lipoprotein MPN_590">
    <location>
        <begin position="33"/>
        <end position="217"/>
    </location>
</feature>
<feature type="lipid moiety-binding region" description="N-palmitoyl cysteine" evidence="1">
    <location>
        <position position="33"/>
    </location>
</feature>
<feature type="lipid moiety-binding region" description="S-diacylglycerol cysteine" evidence="1">
    <location>
        <position position="33"/>
    </location>
</feature>
<keyword id="KW-1003">Cell membrane</keyword>
<keyword id="KW-0449">Lipoprotein</keyword>
<keyword id="KW-0472">Membrane</keyword>
<keyword id="KW-0564">Palmitate</keyword>
<keyword id="KW-1185">Reference proteome</keyword>
<keyword id="KW-0732">Signal</keyword>
<proteinExistence type="inferred from homology"/>
<organism>
    <name type="scientific">Mycoplasma pneumoniae (strain ATCC 29342 / M129 / Subtype 1)</name>
    <name type="common">Mycoplasmoides pneumoniae</name>
    <dbReference type="NCBI Taxonomy" id="272634"/>
    <lineage>
        <taxon>Bacteria</taxon>
        <taxon>Bacillati</taxon>
        <taxon>Mycoplasmatota</taxon>
        <taxon>Mycoplasmoidales</taxon>
        <taxon>Mycoplasmoidaceae</taxon>
        <taxon>Mycoplasmoides</taxon>
    </lineage>
</organism>
<gene>
    <name type="ordered locus">MPN_590</name>
    <name type="ORF">D02_orf217L</name>
    <name type="ORF">MP252</name>
</gene>
<comment type="subcellular location">
    <subcellularLocation>
        <location evidence="1">Cell membrane</location>
        <topology evidence="1">Lipid-anchor</topology>
    </subcellularLocation>
</comment>
<comment type="similarity">
    <text evidence="2">Belongs to the MG067/MG068/MG395 family.</text>
</comment>
<protein>
    <recommendedName>
        <fullName>Uncharacterized lipoprotein MPN_590</fullName>
    </recommendedName>
</protein>
<reference key="1">
    <citation type="journal article" date="1996" name="Nucleic Acids Res.">
        <title>Sequence analysis of 56 kb from the genome of the bacterium Mycoplasma pneumoniae comprising the dnaA region, the atp operon and a cluster of ribosomal protein genes.</title>
        <authorList>
            <person name="Hilbert H."/>
            <person name="Himmelreich R."/>
            <person name="Plagens H."/>
            <person name="Herrmann R."/>
        </authorList>
    </citation>
    <scope>NUCLEOTIDE SEQUENCE [GENOMIC DNA]</scope>
    <source>
        <strain>ATCC 29342 / M129 / Subtype 1</strain>
    </source>
</reference>
<reference key="2">
    <citation type="journal article" date="1996" name="Nucleic Acids Res.">
        <title>Complete sequence analysis of the genome of the bacterium Mycoplasma pneumoniae.</title>
        <authorList>
            <person name="Himmelreich R."/>
            <person name="Hilbert H."/>
            <person name="Plagens H."/>
            <person name="Pirkl E."/>
            <person name="Li B.-C."/>
            <person name="Herrmann R."/>
        </authorList>
    </citation>
    <scope>NUCLEOTIDE SEQUENCE [LARGE SCALE GENOMIC DNA]</scope>
    <source>
        <strain>ATCC 29342 / M129 / Subtype 1</strain>
    </source>
</reference>
<evidence type="ECO:0000255" key="1">
    <source>
        <dbReference type="PROSITE-ProRule" id="PRU00303"/>
    </source>
</evidence>
<evidence type="ECO:0000305" key="2"/>
<name>Y590_MYCPN</name>